<dbReference type="EC" id="3.1.13.-" evidence="5"/>
<dbReference type="EMBL" id="AE014297">
    <property type="protein sequence ID" value="AAF54639.2"/>
    <property type="molecule type" value="Genomic_DNA"/>
</dbReference>
<dbReference type="EMBL" id="AE014297">
    <property type="protein sequence ID" value="AFH06366.1"/>
    <property type="molecule type" value="Genomic_DNA"/>
</dbReference>
<dbReference type="EMBL" id="AY089433">
    <property type="protein sequence ID" value="AAL90171.1"/>
    <property type="molecule type" value="mRNA"/>
</dbReference>
<dbReference type="RefSeq" id="NP_001247048.1">
    <property type="nucleotide sequence ID" value="NM_001260119.2"/>
</dbReference>
<dbReference type="RefSeq" id="NP_650075.1">
    <property type="nucleotide sequence ID" value="NM_141818.2"/>
</dbReference>
<dbReference type="SMR" id="Q9VGN7"/>
<dbReference type="DIP" id="DIP-23707N"/>
<dbReference type="FunCoup" id="Q9VGN7">
    <property type="interactions" value="988"/>
</dbReference>
<dbReference type="IntAct" id="Q9VGN7">
    <property type="interactions" value="2"/>
</dbReference>
<dbReference type="STRING" id="7227.FBpp0081878"/>
<dbReference type="PaxDb" id="7227-FBpp0081878"/>
<dbReference type="DNASU" id="41374"/>
<dbReference type="EnsemblMetazoa" id="FBtr0082402">
    <property type="protein sequence ID" value="FBpp0081878"/>
    <property type="gene ID" value="FBgn0037901"/>
</dbReference>
<dbReference type="EnsemblMetazoa" id="FBtr0308211">
    <property type="protein sequence ID" value="FBpp0300531"/>
    <property type="gene ID" value="FBgn0037901"/>
</dbReference>
<dbReference type="GeneID" id="41374"/>
<dbReference type="KEGG" id="dme:Dmel_CG6744"/>
<dbReference type="UCSC" id="CG6744-RA">
    <property type="organism name" value="d. melanogaster"/>
</dbReference>
<dbReference type="AGR" id="FB:FBgn0037901"/>
<dbReference type="CTD" id="55218"/>
<dbReference type="FlyBase" id="FBgn0037901">
    <property type="gene designation" value="Exd2"/>
</dbReference>
<dbReference type="VEuPathDB" id="VectorBase:FBgn0037901"/>
<dbReference type="eggNOG" id="KOG4373">
    <property type="taxonomic scope" value="Eukaryota"/>
</dbReference>
<dbReference type="GeneTree" id="ENSGT00390000014318"/>
<dbReference type="HOGENOM" id="CLU_019718_0_0_1"/>
<dbReference type="InParanoid" id="Q9VGN7"/>
<dbReference type="OMA" id="RYYQTPK"/>
<dbReference type="OrthoDB" id="1920326at2759"/>
<dbReference type="PhylomeDB" id="Q9VGN7"/>
<dbReference type="BioGRID-ORCS" id="41374">
    <property type="hits" value="0 hits in 1 CRISPR screen"/>
</dbReference>
<dbReference type="GenomeRNAi" id="41374"/>
<dbReference type="PRO" id="PR:Q9VGN7"/>
<dbReference type="Proteomes" id="UP000000803">
    <property type="component" value="Chromosome 3R"/>
</dbReference>
<dbReference type="Bgee" id="FBgn0037901">
    <property type="expression patterns" value="Expressed in embryonic/larval hemocyte (Drosophila) and 62 other cell types or tissues"/>
</dbReference>
<dbReference type="GO" id="GO:0005737">
    <property type="term" value="C:cytoplasm"/>
    <property type="evidence" value="ECO:0000318"/>
    <property type="project" value="GO_Central"/>
</dbReference>
<dbReference type="GO" id="GO:0031966">
    <property type="term" value="C:mitochondrial membrane"/>
    <property type="evidence" value="ECO:0007669"/>
    <property type="project" value="UniProtKB-SubCell"/>
</dbReference>
<dbReference type="GO" id="GO:0005739">
    <property type="term" value="C:mitochondrion"/>
    <property type="evidence" value="ECO:0000314"/>
    <property type="project" value="FlyBase"/>
</dbReference>
<dbReference type="GO" id="GO:0005634">
    <property type="term" value="C:nucleus"/>
    <property type="evidence" value="ECO:0000318"/>
    <property type="project" value="GO_Central"/>
</dbReference>
<dbReference type="GO" id="GO:0008408">
    <property type="term" value="F:3'-5' exonuclease activity"/>
    <property type="evidence" value="ECO:0000250"/>
    <property type="project" value="FlyBase"/>
</dbReference>
<dbReference type="GO" id="GO:0000175">
    <property type="term" value="F:3'-5'-RNA exonuclease activity"/>
    <property type="evidence" value="ECO:0000314"/>
    <property type="project" value="FlyBase"/>
</dbReference>
<dbReference type="GO" id="GO:0046872">
    <property type="term" value="F:metal ion binding"/>
    <property type="evidence" value="ECO:0007669"/>
    <property type="project" value="UniProtKB-KW"/>
</dbReference>
<dbReference type="GO" id="GO:0003676">
    <property type="term" value="F:nucleic acid binding"/>
    <property type="evidence" value="ECO:0007669"/>
    <property type="project" value="InterPro"/>
</dbReference>
<dbReference type="GO" id="GO:0070131">
    <property type="term" value="P:positive regulation of mitochondrial translation"/>
    <property type="evidence" value="ECO:0000315"/>
    <property type="project" value="FlyBase"/>
</dbReference>
<dbReference type="GO" id="GO:0016444">
    <property type="term" value="P:somatic cell DNA recombination"/>
    <property type="evidence" value="ECO:0000315"/>
    <property type="project" value="FlyBase"/>
</dbReference>
<dbReference type="CDD" id="cd06141">
    <property type="entry name" value="WRN_exo"/>
    <property type="match status" value="1"/>
</dbReference>
<dbReference type="FunFam" id="3.30.420.10:FF:000041">
    <property type="entry name" value="Exonuclease 3'-5' domain containing 2"/>
    <property type="match status" value="1"/>
</dbReference>
<dbReference type="Gene3D" id="3.30.420.10">
    <property type="entry name" value="Ribonuclease H-like superfamily/Ribonuclease H"/>
    <property type="match status" value="1"/>
</dbReference>
<dbReference type="InterPro" id="IPR002562">
    <property type="entry name" value="3'-5'_exonuclease_dom"/>
</dbReference>
<dbReference type="InterPro" id="IPR051132">
    <property type="entry name" value="3-5_Exonuclease_domain"/>
</dbReference>
<dbReference type="InterPro" id="IPR012337">
    <property type="entry name" value="RNaseH-like_sf"/>
</dbReference>
<dbReference type="InterPro" id="IPR036397">
    <property type="entry name" value="RNaseH_sf"/>
</dbReference>
<dbReference type="PANTHER" id="PTHR13620">
    <property type="entry name" value="3-5 EXONUCLEASE"/>
    <property type="match status" value="1"/>
</dbReference>
<dbReference type="PANTHER" id="PTHR13620:SF104">
    <property type="entry name" value="EXONUCLEASE 3'-5' DOMAIN-CONTAINING PROTEIN 2"/>
    <property type="match status" value="1"/>
</dbReference>
<dbReference type="Pfam" id="PF01612">
    <property type="entry name" value="DNA_pol_A_exo1"/>
    <property type="match status" value="1"/>
</dbReference>
<dbReference type="SMART" id="SM00474">
    <property type="entry name" value="35EXOc"/>
    <property type="match status" value="1"/>
</dbReference>
<dbReference type="SUPFAM" id="SSF53098">
    <property type="entry name" value="Ribonuclease H-like"/>
    <property type="match status" value="1"/>
</dbReference>
<sequence length="583" mass="66867">MTRESAVATKRNWAILAAGVGLVYVLVRHRHRLLCPLRRVWSFGSLVPQRRIEVINSVQDPTTQWVLNELKNHCQTFKVLGFDCEWITVGGSRRPVALLQLSSHRGLCALFRLCHMKQIPQDLRELLEDDSVIKVGVAPQEDAMKLSHDYGVGVASTLDLRFLCVMAGHKPEGLGKLSKTHLNYTLDKHWRLACSNWEAKTLEPKQLDYAANDALMAVAIYQKLCRDLQPKHFWQRRQLDDNSMHNKFEPFLDVDFTKGFTLNPSGSGVTRSKGSTQSKSNKWVPKKQPYRQIATRTKDFYDNCLLQAPDGELLCTIDRRKASWYLNQNLGTHISEEPFTVRLNFEPAGRAVGDVGRFYQTIKKNQCVVCGDRDAYIRKNVVPREYRKHFPLVMKSHTSDDVLLLCPTCHQLSNISDLRVRSKLAVQCEAPFKQEDGSVKYHDDPQLKRVQSAGKALLHHGAKIPAAKKAEMEKTLLDYYSDQTDITEDLLRQAASVEYRVENSDYCQHGERVVQQYRDHFGGLVELERLWRQHFLHTMQPRFLPELWNVNHNADRLEVRASEGRIDKADLMVAGLDAKIKET</sequence>
<protein>
    <recommendedName>
        <fullName>Exonuclease 3'-5' domain-containing protein 2</fullName>
        <shortName evidence="6">dEXD2</shortName>
        <ecNumber evidence="5">3.1.13.-</ecNumber>
    </recommendedName>
</protein>
<proteinExistence type="evidence at transcript level"/>
<reference key="1">
    <citation type="journal article" date="2000" name="Science">
        <title>The genome sequence of Drosophila melanogaster.</title>
        <authorList>
            <person name="Adams M.D."/>
            <person name="Celniker S.E."/>
            <person name="Holt R.A."/>
            <person name="Evans C.A."/>
            <person name="Gocayne J.D."/>
            <person name="Amanatides P.G."/>
            <person name="Scherer S.E."/>
            <person name="Li P.W."/>
            <person name="Hoskins R.A."/>
            <person name="Galle R.F."/>
            <person name="George R.A."/>
            <person name="Lewis S.E."/>
            <person name="Richards S."/>
            <person name="Ashburner M."/>
            <person name="Henderson S.N."/>
            <person name="Sutton G.G."/>
            <person name="Wortman J.R."/>
            <person name="Yandell M.D."/>
            <person name="Zhang Q."/>
            <person name="Chen L.X."/>
            <person name="Brandon R.C."/>
            <person name="Rogers Y.-H.C."/>
            <person name="Blazej R.G."/>
            <person name="Champe M."/>
            <person name="Pfeiffer B.D."/>
            <person name="Wan K.H."/>
            <person name="Doyle C."/>
            <person name="Baxter E.G."/>
            <person name="Helt G."/>
            <person name="Nelson C.R."/>
            <person name="Miklos G.L.G."/>
            <person name="Abril J.F."/>
            <person name="Agbayani A."/>
            <person name="An H.-J."/>
            <person name="Andrews-Pfannkoch C."/>
            <person name="Baldwin D."/>
            <person name="Ballew R.M."/>
            <person name="Basu A."/>
            <person name="Baxendale J."/>
            <person name="Bayraktaroglu L."/>
            <person name="Beasley E.M."/>
            <person name="Beeson K.Y."/>
            <person name="Benos P.V."/>
            <person name="Berman B.P."/>
            <person name="Bhandari D."/>
            <person name="Bolshakov S."/>
            <person name="Borkova D."/>
            <person name="Botchan M.R."/>
            <person name="Bouck J."/>
            <person name="Brokstein P."/>
            <person name="Brottier P."/>
            <person name="Burtis K.C."/>
            <person name="Busam D.A."/>
            <person name="Butler H."/>
            <person name="Cadieu E."/>
            <person name="Center A."/>
            <person name="Chandra I."/>
            <person name="Cherry J.M."/>
            <person name="Cawley S."/>
            <person name="Dahlke C."/>
            <person name="Davenport L.B."/>
            <person name="Davies P."/>
            <person name="de Pablos B."/>
            <person name="Delcher A."/>
            <person name="Deng Z."/>
            <person name="Mays A.D."/>
            <person name="Dew I."/>
            <person name="Dietz S.M."/>
            <person name="Dodson K."/>
            <person name="Doup L.E."/>
            <person name="Downes M."/>
            <person name="Dugan-Rocha S."/>
            <person name="Dunkov B.C."/>
            <person name="Dunn P."/>
            <person name="Durbin K.J."/>
            <person name="Evangelista C.C."/>
            <person name="Ferraz C."/>
            <person name="Ferriera S."/>
            <person name="Fleischmann W."/>
            <person name="Fosler C."/>
            <person name="Gabrielian A.E."/>
            <person name="Garg N.S."/>
            <person name="Gelbart W.M."/>
            <person name="Glasser K."/>
            <person name="Glodek A."/>
            <person name="Gong F."/>
            <person name="Gorrell J.H."/>
            <person name="Gu Z."/>
            <person name="Guan P."/>
            <person name="Harris M."/>
            <person name="Harris N.L."/>
            <person name="Harvey D.A."/>
            <person name="Heiman T.J."/>
            <person name="Hernandez J.R."/>
            <person name="Houck J."/>
            <person name="Hostin D."/>
            <person name="Houston K.A."/>
            <person name="Howland T.J."/>
            <person name="Wei M.-H."/>
            <person name="Ibegwam C."/>
            <person name="Jalali M."/>
            <person name="Kalush F."/>
            <person name="Karpen G.H."/>
            <person name="Ke Z."/>
            <person name="Kennison J.A."/>
            <person name="Ketchum K.A."/>
            <person name="Kimmel B.E."/>
            <person name="Kodira C.D."/>
            <person name="Kraft C.L."/>
            <person name="Kravitz S."/>
            <person name="Kulp D."/>
            <person name="Lai Z."/>
            <person name="Lasko P."/>
            <person name="Lei Y."/>
            <person name="Levitsky A.A."/>
            <person name="Li J.H."/>
            <person name="Li Z."/>
            <person name="Liang Y."/>
            <person name="Lin X."/>
            <person name="Liu X."/>
            <person name="Mattei B."/>
            <person name="McIntosh T.C."/>
            <person name="McLeod M.P."/>
            <person name="McPherson D."/>
            <person name="Merkulov G."/>
            <person name="Milshina N.V."/>
            <person name="Mobarry C."/>
            <person name="Morris J."/>
            <person name="Moshrefi A."/>
            <person name="Mount S.M."/>
            <person name="Moy M."/>
            <person name="Murphy B."/>
            <person name="Murphy L."/>
            <person name="Muzny D.M."/>
            <person name="Nelson D.L."/>
            <person name="Nelson D.R."/>
            <person name="Nelson K.A."/>
            <person name="Nixon K."/>
            <person name="Nusskern D.R."/>
            <person name="Pacleb J.M."/>
            <person name="Palazzolo M."/>
            <person name="Pittman G.S."/>
            <person name="Pan S."/>
            <person name="Pollard J."/>
            <person name="Puri V."/>
            <person name="Reese M.G."/>
            <person name="Reinert K."/>
            <person name="Remington K."/>
            <person name="Saunders R.D.C."/>
            <person name="Scheeler F."/>
            <person name="Shen H."/>
            <person name="Shue B.C."/>
            <person name="Siden-Kiamos I."/>
            <person name="Simpson M."/>
            <person name="Skupski M.P."/>
            <person name="Smith T.J."/>
            <person name="Spier E."/>
            <person name="Spradling A.C."/>
            <person name="Stapleton M."/>
            <person name="Strong R."/>
            <person name="Sun E."/>
            <person name="Svirskas R."/>
            <person name="Tector C."/>
            <person name="Turner R."/>
            <person name="Venter E."/>
            <person name="Wang A.H."/>
            <person name="Wang X."/>
            <person name="Wang Z.-Y."/>
            <person name="Wassarman D.A."/>
            <person name="Weinstock G.M."/>
            <person name="Weissenbach J."/>
            <person name="Williams S.M."/>
            <person name="Woodage T."/>
            <person name="Worley K.C."/>
            <person name="Wu D."/>
            <person name="Yang S."/>
            <person name="Yao Q.A."/>
            <person name="Ye J."/>
            <person name="Yeh R.-F."/>
            <person name="Zaveri J.S."/>
            <person name="Zhan M."/>
            <person name="Zhang G."/>
            <person name="Zhao Q."/>
            <person name="Zheng L."/>
            <person name="Zheng X.H."/>
            <person name="Zhong F.N."/>
            <person name="Zhong W."/>
            <person name="Zhou X."/>
            <person name="Zhu S.C."/>
            <person name="Zhu X."/>
            <person name="Smith H.O."/>
            <person name="Gibbs R.A."/>
            <person name="Myers E.W."/>
            <person name="Rubin G.M."/>
            <person name="Venter J.C."/>
        </authorList>
    </citation>
    <scope>NUCLEOTIDE SEQUENCE [LARGE SCALE GENOMIC DNA]</scope>
    <source>
        <strain>Berkeley</strain>
    </source>
</reference>
<reference key="2">
    <citation type="journal article" date="2002" name="Genome Biol.">
        <title>Annotation of the Drosophila melanogaster euchromatic genome: a systematic review.</title>
        <authorList>
            <person name="Misra S."/>
            <person name="Crosby M.A."/>
            <person name="Mungall C.J."/>
            <person name="Matthews B.B."/>
            <person name="Campbell K.S."/>
            <person name="Hradecky P."/>
            <person name="Huang Y."/>
            <person name="Kaminker J.S."/>
            <person name="Millburn G.H."/>
            <person name="Prochnik S.E."/>
            <person name="Smith C.D."/>
            <person name="Tupy J.L."/>
            <person name="Whitfield E.J."/>
            <person name="Bayraktaroglu L."/>
            <person name="Berman B.P."/>
            <person name="Bettencourt B.R."/>
            <person name="Celniker S.E."/>
            <person name="de Grey A.D.N.J."/>
            <person name="Drysdale R.A."/>
            <person name="Harris N.L."/>
            <person name="Richter J."/>
            <person name="Russo S."/>
            <person name="Schroeder A.J."/>
            <person name="Shu S.Q."/>
            <person name="Stapleton M."/>
            <person name="Yamada C."/>
            <person name="Ashburner M."/>
            <person name="Gelbart W.M."/>
            <person name="Rubin G.M."/>
            <person name="Lewis S.E."/>
        </authorList>
    </citation>
    <scope>GENOME REANNOTATION</scope>
    <source>
        <strain>Berkeley</strain>
    </source>
</reference>
<reference key="3">
    <citation type="journal article" date="2002" name="Genome Biol.">
        <title>A Drosophila full-length cDNA resource.</title>
        <authorList>
            <person name="Stapleton M."/>
            <person name="Carlson J.W."/>
            <person name="Brokstein P."/>
            <person name="Yu C."/>
            <person name="Champe M."/>
            <person name="George R.A."/>
            <person name="Guarin H."/>
            <person name="Kronmiller B."/>
            <person name="Pacleb J.M."/>
            <person name="Park S."/>
            <person name="Wan K.H."/>
            <person name="Rubin G.M."/>
            <person name="Celniker S.E."/>
        </authorList>
    </citation>
    <scope>NUCLEOTIDE SEQUENCE [LARGE SCALE MRNA]</scope>
    <source>
        <strain>Berkeley</strain>
        <tissue>Testis</tissue>
    </source>
</reference>
<reference key="4">
    <citation type="journal article" date="2007" name="Ann. N. Y. Acad. Sci.">
        <title>Modeling Werner Syndrome in Drosophila melanogaster: hyper-recombination in flies lacking WRN-like exonuclease.</title>
        <authorList>
            <person name="Cox L.S."/>
            <person name="Clancy D.J."/>
            <person name="Boubriak I."/>
            <person name="Saunders R.D."/>
        </authorList>
    </citation>
    <scope>FUNCTION</scope>
</reference>
<reference key="5">
    <citation type="journal article" date="2018" name="Nat. Cell Biol.">
        <title>EXD2 governs germ stem cell homeostasis and lifespan by promoting mitoribosome integrity and translation.</title>
        <authorList>
            <person name="Silva J."/>
            <person name="Aivio S."/>
            <person name="Knobel P.A."/>
            <person name="Bailey L.J."/>
            <person name="Casali A."/>
            <person name="Vinaixa M."/>
            <person name="Garcia-Cao I."/>
            <person name="Coyaud E."/>
            <person name="Jourdain A.A."/>
            <person name="Perez-Ferreros P."/>
            <person name="Rojas A.M."/>
            <person name="Antolin-Fontes A."/>
            <person name="Samino-Gene S."/>
            <person name="Raught B."/>
            <person name="Gonzalez-Reyes A."/>
            <person name="Ribas de Pouplana L."/>
            <person name="Doherty A.J."/>
            <person name="Yanes O."/>
            <person name="Stracker T.H."/>
        </authorList>
    </citation>
    <scope>FUNCTION</scope>
    <scope>SUBCELLULAR LOCATION</scope>
    <scope>DISRUPTION PHENOTYPE</scope>
</reference>
<keyword id="KW-0269">Exonuclease</keyword>
<keyword id="KW-0378">Hydrolase</keyword>
<keyword id="KW-0472">Membrane</keyword>
<keyword id="KW-0479">Metal-binding</keyword>
<keyword id="KW-0496">Mitochondrion</keyword>
<keyword id="KW-0540">Nuclease</keyword>
<keyword id="KW-1185">Reference proteome</keyword>
<keyword id="KW-0812">Transmembrane</keyword>
<keyword id="KW-1133">Transmembrane helix</keyword>
<feature type="chain" id="PRO_0000447986" description="Exonuclease 3'-5' domain-containing protein 2">
    <location>
        <begin position="1"/>
        <end position="583"/>
    </location>
</feature>
<feature type="topological domain" description="Mitochondrial intermembrane" evidence="7">
    <location>
        <begin position="1"/>
        <end position="11"/>
    </location>
</feature>
<feature type="transmembrane region" description="Helical" evidence="2">
    <location>
        <begin position="12"/>
        <end position="29"/>
    </location>
</feature>
<feature type="topological domain" description="Cytoplasmic" evidence="7">
    <location>
        <begin position="30"/>
        <end position="583"/>
    </location>
</feature>
<feature type="domain" description="3'-5' exonuclease" evidence="2">
    <location>
        <begin position="62"/>
        <end position="228"/>
    </location>
</feature>
<feature type="region of interest" description="Disordered" evidence="3">
    <location>
        <begin position="266"/>
        <end position="286"/>
    </location>
</feature>
<feature type="compositionally biased region" description="Polar residues" evidence="3">
    <location>
        <begin position="266"/>
        <end position="281"/>
    </location>
</feature>
<feature type="binding site" evidence="1">
    <location>
        <position position="83"/>
    </location>
    <ligand>
        <name>a divalent metal cation</name>
        <dbReference type="ChEBI" id="CHEBI:60240"/>
        <label>1</label>
        <note>catalytic</note>
    </ligand>
</feature>
<feature type="binding site" evidence="1">
    <location>
        <position position="83"/>
    </location>
    <ligand>
        <name>a divalent metal cation</name>
        <dbReference type="ChEBI" id="CHEBI:60240"/>
        <label>2</label>
        <note>catalytic</note>
    </ligand>
</feature>
<feature type="binding site" evidence="1">
    <location>
        <position position="85"/>
    </location>
    <ligand>
        <name>a divalent metal cation</name>
        <dbReference type="ChEBI" id="CHEBI:60240"/>
        <label>1</label>
        <note>catalytic</note>
    </ligand>
</feature>
<feature type="binding site" evidence="1">
    <location>
        <position position="213"/>
    </location>
    <ligand>
        <name>a divalent metal cation</name>
        <dbReference type="ChEBI" id="CHEBI:60240"/>
        <label>1</label>
        <note>catalytic</note>
    </ligand>
</feature>
<evidence type="ECO:0000250" key="1">
    <source>
        <dbReference type="UniProtKB" id="Q9NVH0"/>
    </source>
</evidence>
<evidence type="ECO:0000255" key="2"/>
<evidence type="ECO:0000256" key="3">
    <source>
        <dbReference type="SAM" id="MobiDB-lite"/>
    </source>
</evidence>
<evidence type="ECO:0000269" key="4">
    <source>
    </source>
</evidence>
<evidence type="ECO:0000269" key="5">
    <source>
    </source>
</evidence>
<evidence type="ECO:0000303" key="6">
    <source>
    </source>
</evidence>
<evidence type="ECO:0000305" key="7"/>
<evidence type="ECO:0000312" key="8">
    <source>
        <dbReference type="FlyBase" id="FBgn0037901"/>
    </source>
</evidence>
<gene>
    <name evidence="8" type="primary">Exd2</name>
    <name evidence="8" type="ORF">CG6744</name>
</gene>
<comment type="function">
    <text evidence="4 5">3'-5' exoribonuclease required for mitochondrial metabolism.</text>
</comment>
<comment type="cofactor">
    <cofactor evidence="1">
        <name>Mg(2+)</name>
        <dbReference type="ChEBI" id="CHEBI:18420"/>
    </cofactor>
    <cofactor evidence="1">
        <name>Mn(2+)</name>
        <dbReference type="ChEBI" id="CHEBI:29035"/>
    </cofactor>
    <text evidence="1">Divalent metal cations; Mg(2+) or Mn(2+).</text>
</comment>
<comment type="subunit">
    <text evidence="1">Homodimer.</text>
</comment>
<comment type="subcellular location">
    <subcellularLocation>
        <location evidence="7">Mitochondrion membrane</location>
    </subcellularLocation>
</comment>
<comment type="disruption phenotype">
    <text evidence="5">Developmental delays and premature female germline stem cell attrition, reduced fecundity, associated with a dramatic extension of lifespan that is reversed with an antioxidant diet.</text>
</comment>
<comment type="similarity">
    <text evidence="7">Belongs to the EXD2 family.</text>
</comment>
<accession>Q9VGN7</accession>
<name>EXD2_DROME</name>
<organism>
    <name type="scientific">Drosophila melanogaster</name>
    <name type="common">Fruit fly</name>
    <dbReference type="NCBI Taxonomy" id="7227"/>
    <lineage>
        <taxon>Eukaryota</taxon>
        <taxon>Metazoa</taxon>
        <taxon>Ecdysozoa</taxon>
        <taxon>Arthropoda</taxon>
        <taxon>Hexapoda</taxon>
        <taxon>Insecta</taxon>
        <taxon>Pterygota</taxon>
        <taxon>Neoptera</taxon>
        <taxon>Endopterygota</taxon>
        <taxon>Diptera</taxon>
        <taxon>Brachycera</taxon>
        <taxon>Muscomorpha</taxon>
        <taxon>Ephydroidea</taxon>
        <taxon>Drosophilidae</taxon>
        <taxon>Drosophila</taxon>
        <taxon>Sophophora</taxon>
    </lineage>
</organism>